<proteinExistence type="inferred from homology"/>
<reference key="1">
    <citation type="journal article" date="2007" name="Proc. Natl. Acad. Sci. U.S.A.">
        <title>Genome sequencing reveals complex secondary metabolome in the marine actinomycete Salinispora tropica.</title>
        <authorList>
            <person name="Udwary D.W."/>
            <person name="Zeigler L."/>
            <person name="Asolkar R.N."/>
            <person name="Singan V."/>
            <person name="Lapidus A."/>
            <person name="Fenical W."/>
            <person name="Jensen P.R."/>
            <person name="Moore B.S."/>
        </authorList>
    </citation>
    <scope>NUCLEOTIDE SEQUENCE [LARGE SCALE GENOMIC DNA]</scope>
    <source>
        <strain>ATCC BAA-916 / DSM 44818 / JCM 13857 / NBRC 105044 / CNB-440</strain>
    </source>
</reference>
<sequence>MSAPQDRTDDGGVPVPVTPAGATGGAPAELPPSSPAGRGMFGDQGTGDVSGYGGLVRPQRSIEAATRPYGGYFDEVADALEEAYPAFGEAIEKVVVDRGELTLHIRPERIAEVCQVMRDDLSLRFELCSSVSGVDYLGADACRLHVVYQLTSMTYRRQVRLEAAVSAENPHLPSVTSVYPTADWQERETYDMFGVIFDGHPGLTRILMPDDWEGHPQRKDYPLGGVPVEYKGAEIPPPDRRRSYQ</sequence>
<keyword id="KW-1003">Cell membrane</keyword>
<keyword id="KW-0472">Membrane</keyword>
<keyword id="KW-0520">NAD</keyword>
<keyword id="KW-0874">Quinone</keyword>
<keyword id="KW-1185">Reference proteome</keyword>
<keyword id="KW-1278">Translocase</keyword>
<keyword id="KW-0813">Transport</keyword>
<accession>A4XC36</accession>
<comment type="function">
    <text evidence="1">NDH-1 shuttles electrons from NADH, via FMN and iron-sulfur (Fe-S) centers, to quinones in the respiratory chain. The immediate electron acceptor for the enzyme in this species is believed to be a menaquinone. Couples the redox reaction to proton translocation (for every two electrons transferred, four hydrogen ions are translocated across the cytoplasmic membrane), and thus conserves the redox energy in a proton gradient.</text>
</comment>
<comment type="catalytic activity">
    <reaction evidence="1">
        <text>a quinone + NADH + 5 H(+)(in) = a quinol + NAD(+) + 4 H(+)(out)</text>
        <dbReference type="Rhea" id="RHEA:57888"/>
        <dbReference type="ChEBI" id="CHEBI:15378"/>
        <dbReference type="ChEBI" id="CHEBI:24646"/>
        <dbReference type="ChEBI" id="CHEBI:57540"/>
        <dbReference type="ChEBI" id="CHEBI:57945"/>
        <dbReference type="ChEBI" id="CHEBI:132124"/>
    </reaction>
</comment>
<comment type="subunit">
    <text evidence="1">NDH-1 is composed of 14 different subunits. Subunits NuoB, C, D, E, F, and G constitute the peripheral sector of the complex.</text>
</comment>
<comment type="subcellular location">
    <subcellularLocation>
        <location evidence="1">Cell membrane</location>
        <topology evidence="1">Peripheral membrane protein</topology>
        <orientation evidence="1">Cytoplasmic side</orientation>
    </subcellularLocation>
</comment>
<comment type="similarity">
    <text evidence="1">Belongs to the complex I 30 kDa subunit family.</text>
</comment>
<protein>
    <recommendedName>
        <fullName evidence="1">NADH-quinone oxidoreductase subunit C</fullName>
        <ecNumber evidence="1">7.1.1.-</ecNumber>
    </recommendedName>
    <alternativeName>
        <fullName evidence="1">NADH dehydrogenase I subunit C</fullName>
    </alternativeName>
    <alternativeName>
        <fullName evidence="1">NDH-1 subunit C</fullName>
    </alternativeName>
</protein>
<name>NUOC_SALTO</name>
<evidence type="ECO:0000255" key="1">
    <source>
        <dbReference type="HAMAP-Rule" id="MF_01357"/>
    </source>
</evidence>
<evidence type="ECO:0000256" key="2">
    <source>
        <dbReference type="SAM" id="MobiDB-lite"/>
    </source>
</evidence>
<dbReference type="EC" id="7.1.1.-" evidence="1"/>
<dbReference type="EMBL" id="CP000667">
    <property type="protein sequence ID" value="ABP56493.1"/>
    <property type="molecule type" value="Genomic_DNA"/>
</dbReference>
<dbReference type="RefSeq" id="WP_012015261.1">
    <property type="nucleotide sequence ID" value="NC_009380.1"/>
</dbReference>
<dbReference type="SMR" id="A4XC36"/>
<dbReference type="STRING" id="369723.Strop_4063"/>
<dbReference type="KEGG" id="stp:Strop_4063"/>
<dbReference type="PATRIC" id="fig|369723.5.peg.4201"/>
<dbReference type="eggNOG" id="COG0852">
    <property type="taxonomic scope" value="Bacteria"/>
</dbReference>
<dbReference type="HOGENOM" id="CLU_042628_4_0_11"/>
<dbReference type="Proteomes" id="UP000000235">
    <property type="component" value="Chromosome"/>
</dbReference>
<dbReference type="GO" id="GO:0005886">
    <property type="term" value="C:plasma membrane"/>
    <property type="evidence" value="ECO:0007669"/>
    <property type="project" value="UniProtKB-SubCell"/>
</dbReference>
<dbReference type="GO" id="GO:0008137">
    <property type="term" value="F:NADH dehydrogenase (ubiquinone) activity"/>
    <property type="evidence" value="ECO:0007669"/>
    <property type="project" value="InterPro"/>
</dbReference>
<dbReference type="GO" id="GO:0050136">
    <property type="term" value="F:NADH:ubiquinone reductase (non-electrogenic) activity"/>
    <property type="evidence" value="ECO:0007669"/>
    <property type="project" value="UniProtKB-UniRule"/>
</dbReference>
<dbReference type="GO" id="GO:0048038">
    <property type="term" value="F:quinone binding"/>
    <property type="evidence" value="ECO:0007669"/>
    <property type="project" value="UniProtKB-KW"/>
</dbReference>
<dbReference type="Gene3D" id="3.30.460.80">
    <property type="entry name" value="NADH:ubiquinone oxidoreductase, 30kDa subunit"/>
    <property type="match status" value="1"/>
</dbReference>
<dbReference type="HAMAP" id="MF_01357">
    <property type="entry name" value="NDH1_NuoC"/>
    <property type="match status" value="1"/>
</dbReference>
<dbReference type="InterPro" id="IPR010218">
    <property type="entry name" value="NADH_DH_suC"/>
</dbReference>
<dbReference type="InterPro" id="IPR037232">
    <property type="entry name" value="NADH_quin_OxRdtase_su_C/D-like"/>
</dbReference>
<dbReference type="InterPro" id="IPR001268">
    <property type="entry name" value="NADH_UbQ_OxRdtase_30kDa_su"/>
</dbReference>
<dbReference type="NCBIfam" id="TIGR01961">
    <property type="entry name" value="NuoC_fam"/>
    <property type="match status" value="1"/>
</dbReference>
<dbReference type="NCBIfam" id="NF005856">
    <property type="entry name" value="PRK07785.1"/>
    <property type="match status" value="1"/>
</dbReference>
<dbReference type="PANTHER" id="PTHR10884:SF14">
    <property type="entry name" value="NADH DEHYDROGENASE [UBIQUINONE] IRON-SULFUR PROTEIN 3, MITOCHONDRIAL"/>
    <property type="match status" value="1"/>
</dbReference>
<dbReference type="PANTHER" id="PTHR10884">
    <property type="entry name" value="NADH DEHYDROGENASE UBIQUINONE IRON-SULFUR PROTEIN 3"/>
    <property type="match status" value="1"/>
</dbReference>
<dbReference type="Pfam" id="PF00329">
    <property type="entry name" value="Complex1_30kDa"/>
    <property type="match status" value="1"/>
</dbReference>
<dbReference type="SUPFAM" id="SSF143243">
    <property type="entry name" value="Nqo5-like"/>
    <property type="match status" value="1"/>
</dbReference>
<gene>
    <name evidence="1" type="primary">nuoC</name>
    <name type="ordered locus">Strop_4063</name>
</gene>
<feature type="chain" id="PRO_1000143681" description="NADH-quinone oxidoreductase subunit C">
    <location>
        <begin position="1"/>
        <end position="245"/>
    </location>
</feature>
<feature type="region of interest" description="Disordered" evidence="2">
    <location>
        <begin position="1"/>
        <end position="54"/>
    </location>
</feature>
<feature type="region of interest" description="Disordered" evidence="2">
    <location>
        <begin position="216"/>
        <end position="245"/>
    </location>
</feature>
<feature type="compositionally biased region" description="Basic and acidic residues" evidence="2">
    <location>
        <begin position="1"/>
        <end position="10"/>
    </location>
</feature>
<feature type="compositionally biased region" description="Low complexity" evidence="2">
    <location>
        <begin position="11"/>
        <end position="28"/>
    </location>
</feature>
<feature type="compositionally biased region" description="Gly residues" evidence="2">
    <location>
        <begin position="39"/>
        <end position="54"/>
    </location>
</feature>
<organism>
    <name type="scientific">Salinispora tropica (strain ATCC BAA-916 / DSM 44818 / JCM 13857 / NBRC 105044 / CNB-440)</name>
    <dbReference type="NCBI Taxonomy" id="369723"/>
    <lineage>
        <taxon>Bacteria</taxon>
        <taxon>Bacillati</taxon>
        <taxon>Actinomycetota</taxon>
        <taxon>Actinomycetes</taxon>
        <taxon>Micromonosporales</taxon>
        <taxon>Micromonosporaceae</taxon>
        <taxon>Salinispora</taxon>
    </lineage>
</organism>